<organism>
    <name type="scientific">Taeniopygia guttata</name>
    <name type="common">Zebra finch</name>
    <name type="synonym">Poephila guttata</name>
    <dbReference type="NCBI Taxonomy" id="59729"/>
    <lineage>
        <taxon>Eukaryota</taxon>
        <taxon>Metazoa</taxon>
        <taxon>Chordata</taxon>
        <taxon>Craniata</taxon>
        <taxon>Vertebrata</taxon>
        <taxon>Euteleostomi</taxon>
        <taxon>Archelosauria</taxon>
        <taxon>Archosauria</taxon>
        <taxon>Dinosauria</taxon>
        <taxon>Saurischia</taxon>
        <taxon>Theropoda</taxon>
        <taxon>Coelurosauria</taxon>
        <taxon>Aves</taxon>
        <taxon>Neognathae</taxon>
        <taxon>Neoaves</taxon>
        <taxon>Telluraves</taxon>
        <taxon>Australaves</taxon>
        <taxon>Passeriformes</taxon>
        <taxon>Passeroidea</taxon>
        <taxon>Estrildidae</taxon>
        <taxon>Estrildinae</taxon>
        <taxon>Taeniopygia</taxon>
    </lineage>
</organism>
<evidence type="ECO:0000250" key="1">
    <source>
        <dbReference type="UniProtKB" id="P61247"/>
    </source>
</evidence>
<evidence type="ECO:0000250" key="2">
    <source>
        <dbReference type="UniProtKB" id="P97351"/>
    </source>
</evidence>
<evidence type="ECO:0000255" key="3">
    <source>
        <dbReference type="HAMAP-Rule" id="MF_03122"/>
    </source>
</evidence>
<evidence type="ECO:0000256" key="4">
    <source>
        <dbReference type="SAM" id="MobiDB-lite"/>
    </source>
</evidence>
<evidence type="ECO:0000305" key="5"/>
<keyword id="KW-0963">Cytoplasm</keyword>
<keyword id="KW-0539">Nucleus</keyword>
<keyword id="KW-1185">Reference proteome</keyword>
<keyword id="KW-0687">Ribonucleoprotein</keyword>
<keyword id="KW-0689">Ribosomal protein</keyword>
<feature type="initiator methionine" description="Removed" evidence="3">
    <location>
        <position position="1"/>
    </location>
</feature>
<feature type="chain" id="PRO_0000389295" description="Small ribosomal subunit protein eS1">
    <location>
        <begin position="2"/>
        <end position="264"/>
    </location>
</feature>
<feature type="region of interest" description="Disordered" evidence="4">
    <location>
        <begin position="232"/>
        <end position="264"/>
    </location>
</feature>
<feature type="compositionally biased region" description="Basic and acidic residues" evidence="4">
    <location>
        <begin position="242"/>
        <end position="255"/>
    </location>
</feature>
<reference key="1">
    <citation type="journal article" date="2006" name="Proc. Natl. Acad. Sci. U.S.A.">
        <title>A molecular neuroethological approach for identifying and characterizing a cascade of behaviorally regulated genes.</title>
        <authorList>
            <person name="Wada K."/>
            <person name="Howard J.T."/>
            <person name="McConnell P."/>
            <person name="Whitney O."/>
            <person name="Lints T."/>
            <person name="Rivas M.V."/>
            <person name="Horita H."/>
            <person name="Patterson M.A."/>
            <person name="White S.A."/>
            <person name="Scharff C."/>
            <person name="Haesler S."/>
            <person name="Zhao S."/>
            <person name="Sakaguchi H."/>
            <person name="Hagiwara M."/>
            <person name="Shiraki T."/>
            <person name="Hirozane-Kishikawa T."/>
            <person name="Skene P."/>
            <person name="Hayashizaki Y."/>
            <person name="Carninci P."/>
            <person name="Jarvis E.D."/>
        </authorList>
    </citation>
    <scope>NUCLEOTIDE SEQUENCE [LARGE SCALE MRNA]</scope>
    <source>
        <tissue>Brain</tissue>
    </source>
</reference>
<comment type="function">
    <text evidence="1 3">Component of the small ribosomal subunit. The ribosome is a large ribonucleoprotein complex responsible for the synthesis of proteins in the cell. Part of the small subunit (SSU) processome, first precursor of the small eukaryotic ribosomal subunit. During the assembly of the SSU processome in the nucleolus, many ribosome biogenesis factors, an RNA chaperone and ribosomal proteins associate with the nascent pre-rRNA and work in concert to generate RNA folding, modifications, rearrangements and cleavage as well as targeted degradation of pre-ribosomal RNA by the RNA exosome (By similarity). May play a role during erythropoiesis (By similarity).</text>
</comment>
<comment type="subunit">
    <text evidence="1">Component of the small ribosomal subunit. Mature ribosomes consist of a small (40S) and a large (60S) subunit. The 40S subunit contains about 33 different proteins and 1 molecule of RNA (18S). The 60S subunit contains about 49 different proteins and 3 molecules of RNA (28S, 5.8S and 5S). Part of the small subunit (SSU) processome, composed of more than 70 proteins and the RNA chaperone small nucleolar RNA (snoRNA) U3.</text>
</comment>
<comment type="subcellular location">
    <subcellularLocation>
        <location evidence="2 3">Cytoplasm</location>
    </subcellularLocation>
    <subcellularLocation>
        <location evidence="2 3">Nucleus</location>
    </subcellularLocation>
    <subcellularLocation>
        <location evidence="1">Nucleus</location>
        <location evidence="1">Nucleolus</location>
    </subcellularLocation>
</comment>
<comment type="similarity">
    <text evidence="3">Belongs to the eukaryotic ribosomal protein eS1 family.</text>
</comment>
<gene>
    <name evidence="3" type="primary">RPS3A</name>
</gene>
<dbReference type="EMBL" id="DQ214670">
    <property type="protein sequence ID" value="ACH44540.1"/>
    <property type="molecule type" value="mRNA"/>
</dbReference>
<dbReference type="EMBL" id="DQ214672">
    <property type="protein sequence ID" value="ACH44541.1"/>
    <property type="molecule type" value="mRNA"/>
</dbReference>
<dbReference type="RefSeq" id="NP_001185510.1">
    <property type="nucleotide sequence ID" value="NM_001198581.1"/>
</dbReference>
<dbReference type="SMR" id="B5FZS9"/>
<dbReference type="STRING" id="59729.ENSTGUP00000015531"/>
<dbReference type="Ensembl" id="ENSTGUT00000037298.1">
    <property type="protein sequence ID" value="ENSTGUP00000030042.1"/>
    <property type="gene ID" value="ENSTGUG00000029174.1"/>
</dbReference>
<dbReference type="GeneID" id="100190288"/>
<dbReference type="KEGG" id="tgu:100190288"/>
<dbReference type="CTD" id="6189"/>
<dbReference type="GeneTree" id="ENSGT00390000018433"/>
<dbReference type="HOGENOM" id="CLU_062507_0_1_1"/>
<dbReference type="InParanoid" id="B5FZS9"/>
<dbReference type="OMA" id="TRFKGHE"/>
<dbReference type="OrthoDB" id="9834376at2759"/>
<dbReference type="TreeFam" id="TF300037"/>
<dbReference type="Proteomes" id="UP000007754">
    <property type="component" value="Chromosome 4"/>
</dbReference>
<dbReference type="GO" id="GO:0022627">
    <property type="term" value="C:cytosolic small ribosomal subunit"/>
    <property type="evidence" value="ECO:0007669"/>
    <property type="project" value="UniProtKB-UniRule"/>
</dbReference>
<dbReference type="GO" id="GO:0005730">
    <property type="term" value="C:nucleolus"/>
    <property type="evidence" value="ECO:0007669"/>
    <property type="project" value="UniProtKB-SubCell"/>
</dbReference>
<dbReference type="GO" id="GO:0032040">
    <property type="term" value="C:small-subunit processome"/>
    <property type="evidence" value="ECO:0000250"/>
    <property type="project" value="UniProtKB"/>
</dbReference>
<dbReference type="GO" id="GO:0003735">
    <property type="term" value="F:structural constituent of ribosome"/>
    <property type="evidence" value="ECO:0007669"/>
    <property type="project" value="UniProtKB-UniRule"/>
</dbReference>
<dbReference type="GO" id="GO:0042274">
    <property type="term" value="P:ribosomal small subunit biogenesis"/>
    <property type="evidence" value="ECO:0000250"/>
    <property type="project" value="UniProtKB"/>
</dbReference>
<dbReference type="GO" id="GO:0006412">
    <property type="term" value="P:translation"/>
    <property type="evidence" value="ECO:0007669"/>
    <property type="project" value="UniProtKB-UniRule"/>
</dbReference>
<dbReference type="HAMAP" id="MF_03122">
    <property type="entry name" value="Ribosomal_eS1_euk"/>
    <property type="match status" value="1"/>
</dbReference>
<dbReference type="InterPro" id="IPR001593">
    <property type="entry name" value="Ribosomal_eS1"/>
</dbReference>
<dbReference type="InterPro" id="IPR018281">
    <property type="entry name" value="Ribosomal_eS1_CS"/>
</dbReference>
<dbReference type="InterPro" id="IPR027500">
    <property type="entry name" value="Ribosomal_eS1_euk"/>
</dbReference>
<dbReference type="PANTHER" id="PTHR11830">
    <property type="entry name" value="40S RIBOSOMAL PROTEIN S3A"/>
    <property type="match status" value="1"/>
</dbReference>
<dbReference type="Pfam" id="PF01015">
    <property type="entry name" value="Ribosomal_S3Ae"/>
    <property type="match status" value="1"/>
</dbReference>
<dbReference type="SMART" id="SM01397">
    <property type="entry name" value="Ribosomal_S3Ae"/>
    <property type="match status" value="1"/>
</dbReference>
<dbReference type="PROSITE" id="PS01191">
    <property type="entry name" value="RIBOSOMAL_S3AE"/>
    <property type="match status" value="1"/>
</dbReference>
<accession>B5FZS9</accession>
<protein>
    <recommendedName>
        <fullName evidence="3">Small ribosomal subunit protein eS1</fullName>
    </recommendedName>
    <alternativeName>
        <fullName evidence="5">40S ribosomal protein S3a</fullName>
    </alternativeName>
</protein>
<sequence>MAVGKNKRLTKGGKKGAKKKVVDPFSKKDWYDVKAPAMFNIRNIGKTLVTRTQGTKIASDGLKGRVFEVSLADLQNDEVAFRKFKLITEDVQGKNCLTNFHGMDLTRDKMCSMVKKWQTMIEAHVDVKTTDGYLLRLFCVGFTKKRNNQIRKTSYAQHQQVRQIRKKMMEIMTREVQTNDLKEVVNKLIPDSIGKDIEKACQSIYPLHDVYVRKVKMLKKPKFELGKLMELHGEGGGAGKPSGDEAGTKVERADGYEPPVQESV</sequence>
<proteinExistence type="evidence at transcript level"/>
<name>RS3A_TAEGU</name>